<comment type="function">
    <text evidence="1">Excises uracil residues from the DNA which can arise as a result of misincorporation of dUMP residues by DNA polymerase or due to deamination of cytosine.</text>
</comment>
<comment type="catalytic activity">
    <reaction evidence="1">
        <text>Hydrolyzes single-stranded DNA or mismatched double-stranded DNA and polynucleotides, releasing free uracil.</text>
        <dbReference type="EC" id="3.2.2.27"/>
    </reaction>
</comment>
<comment type="subcellular location">
    <subcellularLocation>
        <location evidence="1">Cytoplasm</location>
    </subcellularLocation>
</comment>
<comment type="similarity">
    <text evidence="1">Belongs to the uracil-DNA glycosylase (UDG) superfamily. UNG family.</text>
</comment>
<accession>B7N6H1</accession>
<dbReference type="EC" id="3.2.2.27" evidence="1"/>
<dbReference type="EMBL" id="CU928163">
    <property type="protein sequence ID" value="CAR14080.1"/>
    <property type="molecule type" value="Genomic_DNA"/>
</dbReference>
<dbReference type="RefSeq" id="WP_001262720.1">
    <property type="nucleotide sequence ID" value="NC_011751.1"/>
</dbReference>
<dbReference type="RefSeq" id="YP_002413604.1">
    <property type="nucleotide sequence ID" value="NC_011751.1"/>
</dbReference>
<dbReference type="SMR" id="B7N6H1"/>
<dbReference type="STRING" id="585056.ECUMN_2905"/>
<dbReference type="KEGG" id="eum:ECUMN_2905"/>
<dbReference type="PATRIC" id="fig|585056.7.peg.3092"/>
<dbReference type="HOGENOM" id="CLU_032162_3_0_6"/>
<dbReference type="Proteomes" id="UP000007097">
    <property type="component" value="Chromosome"/>
</dbReference>
<dbReference type="GO" id="GO:0005737">
    <property type="term" value="C:cytoplasm"/>
    <property type="evidence" value="ECO:0007669"/>
    <property type="project" value="UniProtKB-SubCell"/>
</dbReference>
<dbReference type="GO" id="GO:0004844">
    <property type="term" value="F:uracil DNA N-glycosylase activity"/>
    <property type="evidence" value="ECO:0007669"/>
    <property type="project" value="UniProtKB-UniRule"/>
</dbReference>
<dbReference type="GO" id="GO:0097510">
    <property type="term" value="P:base-excision repair, AP site formation via deaminated base removal"/>
    <property type="evidence" value="ECO:0007669"/>
    <property type="project" value="TreeGrafter"/>
</dbReference>
<dbReference type="CDD" id="cd10027">
    <property type="entry name" value="UDG-F1-like"/>
    <property type="match status" value="1"/>
</dbReference>
<dbReference type="FunFam" id="3.40.470.10:FF:000001">
    <property type="entry name" value="Uracil-DNA glycosylase"/>
    <property type="match status" value="1"/>
</dbReference>
<dbReference type="Gene3D" id="3.40.470.10">
    <property type="entry name" value="Uracil-DNA glycosylase-like domain"/>
    <property type="match status" value="1"/>
</dbReference>
<dbReference type="HAMAP" id="MF_00148">
    <property type="entry name" value="UDG"/>
    <property type="match status" value="1"/>
</dbReference>
<dbReference type="InterPro" id="IPR002043">
    <property type="entry name" value="UDG_fam1"/>
</dbReference>
<dbReference type="InterPro" id="IPR018085">
    <property type="entry name" value="Ura-DNA_Glyclase_AS"/>
</dbReference>
<dbReference type="InterPro" id="IPR005122">
    <property type="entry name" value="Uracil-DNA_glycosylase-like"/>
</dbReference>
<dbReference type="InterPro" id="IPR036895">
    <property type="entry name" value="Uracil-DNA_glycosylase-like_sf"/>
</dbReference>
<dbReference type="NCBIfam" id="NF003588">
    <property type="entry name" value="PRK05254.1-1"/>
    <property type="match status" value="1"/>
</dbReference>
<dbReference type="NCBIfam" id="NF003589">
    <property type="entry name" value="PRK05254.1-2"/>
    <property type="match status" value="1"/>
</dbReference>
<dbReference type="NCBIfam" id="NF003591">
    <property type="entry name" value="PRK05254.1-4"/>
    <property type="match status" value="1"/>
</dbReference>
<dbReference type="NCBIfam" id="NF003592">
    <property type="entry name" value="PRK05254.1-5"/>
    <property type="match status" value="1"/>
</dbReference>
<dbReference type="NCBIfam" id="TIGR00628">
    <property type="entry name" value="ung"/>
    <property type="match status" value="1"/>
</dbReference>
<dbReference type="PANTHER" id="PTHR11264">
    <property type="entry name" value="URACIL-DNA GLYCOSYLASE"/>
    <property type="match status" value="1"/>
</dbReference>
<dbReference type="PANTHER" id="PTHR11264:SF0">
    <property type="entry name" value="URACIL-DNA GLYCOSYLASE"/>
    <property type="match status" value="1"/>
</dbReference>
<dbReference type="Pfam" id="PF03167">
    <property type="entry name" value="UDG"/>
    <property type="match status" value="1"/>
</dbReference>
<dbReference type="SMART" id="SM00986">
    <property type="entry name" value="UDG"/>
    <property type="match status" value="1"/>
</dbReference>
<dbReference type="SMART" id="SM00987">
    <property type="entry name" value="UreE_C"/>
    <property type="match status" value="1"/>
</dbReference>
<dbReference type="SUPFAM" id="SSF52141">
    <property type="entry name" value="Uracil-DNA glycosylase-like"/>
    <property type="match status" value="1"/>
</dbReference>
<dbReference type="PROSITE" id="PS00130">
    <property type="entry name" value="U_DNA_GLYCOSYLASE"/>
    <property type="match status" value="1"/>
</dbReference>
<gene>
    <name evidence="1" type="primary">ung</name>
    <name type="ordered locus">ECUMN_2905</name>
</gene>
<keyword id="KW-0963">Cytoplasm</keyword>
<keyword id="KW-0227">DNA damage</keyword>
<keyword id="KW-0234">DNA repair</keyword>
<keyword id="KW-0378">Hydrolase</keyword>
<evidence type="ECO:0000255" key="1">
    <source>
        <dbReference type="HAMAP-Rule" id="MF_00148"/>
    </source>
</evidence>
<proteinExistence type="inferred from homology"/>
<reference key="1">
    <citation type="journal article" date="2009" name="PLoS Genet.">
        <title>Organised genome dynamics in the Escherichia coli species results in highly diverse adaptive paths.</title>
        <authorList>
            <person name="Touchon M."/>
            <person name="Hoede C."/>
            <person name="Tenaillon O."/>
            <person name="Barbe V."/>
            <person name="Baeriswyl S."/>
            <person name="Bidet P."/>
            <person name="Bingen E."/>
            <person name="Bonacorsi S."/>
            <person name="Bouchier C."/>
            <person name="Bouvet O."/>
            <person name="Calteau A."/>
            <person name="Chiapello H."/>
            <person name="Clermont O."/>
            <person name="Cruveiller S."/>
            <person name="Danchin A."/>
            <person name="Diard M."/>
            <person name="Dossat C."/>
            <person name="Karoui M.E."/>
            <person name="Frapy E."/>
            <person name="Garry L."/>
            <person name="Ghigo J.M."/>
            <person name="Gilles A.M."/>
            <person name="Johnson J."/>
            <person name="Le Bouguenec C."/>
            <person name="Lescat M."/>
            <person name="Mangenot S."/>
            <person name="Martinez-Jehanne V."/>
            <person name="Matic I."/>
            <person name="Nassif X."/>
            <person name="Oztas S."/>
            <person name="Petit M.A."/>
            <person name="Pichon C."/>
            <person name="Rouy Z."/>
            <person name="Ruf C.S."/>
            <person name="Schneider D."/>
            <person name="Tourret J."/>
            <person name="Vacherie B."/>
            <person name="Vallenet D."/>
            <person name="Medigue C."/>
            <person name="Rocha E.P.C."/>
            <person name="Denamur E."/>
        </authorList>
    </citation>
    <scope>NUCLEOTIDE SEQUENCE [LARGE SCALE GENOMIC DNA]</scope>
    <source>
        <strain>UMN026 / ExPEC</strain>
    </source>
</reference>
<sequence length="229" mass="25662">MANELTWHDVLAEEKQQPYFLNTLQTVASERQSGVTIYPPQKDVFNAFRFTELGDVKVVILGQDPYHGPGQAHGLAFSVRPGIATPPSLLNMYKELENTIPGFTRPNHGYLESWARQGVLLLNTVLTVRAGQAHSHASLGWETFTDKVISLINQHREGVVFLLWGSHAQKKGAIIDKQRHHVLKAPHPSPLSAHRGFFGCNHFVLANQWLEQHGETPIDWMPVLPAESE</sequence>
<protein>
    <recommendedName>
        <fullName evidence="1">Uracil-DNA glycosylase</fullName>
        <shortName evidence="1">UDG</shortName>
        <ecNumber evidence="1">3.2.2.27</ecNumber>
    </recommendedName>
</protein>
<name>UNG_ECOLU</name>
<organism>
    <name type="scientific">Escherichia coli O17:K52:H18 (strain UMN026 / ExPEC)</name>
    <dbReference type="NCBI Taxonomy" id="585056"/>
    <lineage>
        <taxon>Bacteria</taxon>
        <taxon>Pseudomonadati</taxon>
        <taxon>Pseudomonadota</taxon>
        <taxon>Gammaproteobacteria</taxon>
        <taxon>Enterobacterales</taxon>
        <taxon>Enterobacteriaceae</taxon>
        <taxon>Escherichia</taxon>
    </lineage>
</organism>
<feature type="chain" id="PRO_1000199780" description="Uracil-DNA glycosylase">
    <location>
        <begin position="1"/>
        <end position="229"/>
    </location>
</feature>
<feature type="active site" description="Proton acceptor" evidence="1">
    <location>
        <position position="64"/>
    </location>
</feature>